<gene>
    <name evidence="1" type="primary">menD</name>
    <name type="ordered locus">P9301_06331</name>
</gene>
<feature type="chain" id="PRO_0000341801" description="2-succinyl-5-enolpyruvyl-6-hydroxy-3-cyclohexene-1-carboxylate synthase">
    <location>
        <begin position="1"/>
        <end position="587"/>
    </location>
</feature>
<evidence type="ECO:0000255" key="1">
    <source>
        <dbReference type="HAMAP-Rule" id="MF_01659"/>
    </source>
</evidence>
<protein>
    <recommendedName>
        <fullName evidence="1">2-succinyl-5-enolpyruvyl-6-hydroxy-3-cyclohexene-1-carboxylate synthase</fullName>
        <shortName evidence="1">SEPHCHC synthase</shortName>
        <ecNumber evidence="1">2.2.1.9</ecNumber>
    </recommendedName>
</protein>
<organism>
    <name type="scientific">Prochlorococcus marinus (strain MIT 9301)</name>
    <dbReference type="NCBI Taxonomy" id="167546"/>
    <lineage>
        <taxon>Bacteria</taxon>
        <taxon>Bacillati</taxon>
        <taxon>Cyanobacteriota</taxon>
        <taxon>Cyanophyceae</taxon>
        <taxon>Synechococcales</taxon>
        <taxon>Prochlorococcaceae</taxon>
        <taxon>Prochlorococcus</taxon>
    </lineage>
</organism>
<reference key="1">
    <citation type="journal article" date="2007" name="PLoS Genet.">
        <title>Patterns and implications of gene gain and loss in the evolution of Prochlorococcus.</title>
        <authorList>
            <person name="Kettler G.C."/>
            <person name="Martiny A.C."/>
            <person name="Huang K."/>
            <person name="Zucker J."/>
            <person name="Coleman M.L."/>
            <person name="Rodrigue S."/>
            <person name="Chen F."/>
            <person name="Lapidus A."/>
            <person name="Ferriera S."/>
            <person name="Johnson J."/>
            <person name="Steglich C."/>
            <person name="Church G.M."/>
            <person name="Richardson P."/>
            <person name="Chisholm S.W."/>
        </authorList>
    </citation>
    <scope>NUCLEOTIDE SEQUENCE [LARGE SCALE GENOMIC DNA]</scope>
    <source>
        <strain>MIT 9301</strain>
    </source>
</reference>
<accession>A3PBY1</accession>
<comment type="function">
    <text evidence="1">Catalyzes the thiamine diphosphate-dependent decarboxylation of 2-oxoglutarate and the subsequent addition of the resulting succinic semialdehyde-thiamine pyrophosphate anion to isochorismate to yield 2-succinyl-5-enolpyruvyl-6-hydroxy-3-cyclohexene-1-carboxylate (SEPHCHC).</text>
</comment>
<comment type="catalytic activity">
    <reaction evidence="1">
        <text>isochorismate + 2-oxoglutarate + H(+) = 5-enolpyruvoyl-6-hydroxy-2-succinyl-cyclohex-3-ene-1-carboxylate + CO2</text>
        <dbReference type="Rhea" id="RHEA:25593"/>
        <dbReference type="ChEBI" id="CHEBI:15378"/>
        <dbReference type="ChEBI" id="CHEBI:16526"/>
        <dbReference type="ChEBI" id="CHEBI:16810"/>
        <dbReference type="ChEBI" id="CHEBI:29780"/>
        <dbReference type="ChEBI" id="CHEBI:58818"/>
        <dbReference type="EC" id="2.2.1.9"/>
    </reaction>
</comment>
<comment type="cofactor">
    <cofactor evidence="1">
        <name>Mg(2+)</name>
        <dbReference type="ChEBI" id="CHEBI:18420"/>
    </cofactor>
    <cofactor evidence="1">
        <name>Mn(2+)</name>
        <dbReference type="ChEBI" id="CHEBI:29035"/>
    </cofactor>
</comment>
<comment type="cofactor">
    <cofactor evidence="1">
        <name>thiamine diphosphate</name>
        <dbReference type="ChEBI" id="CHEBI:58937"/>
    </cofactor>
    <text evidence="1">Binds 1 thiamine pyrophosphate per subunit.</text>
</comment>
<comment type="pathway">
    <text evidence="1">Quinol/quinone metabolism; 1,4-dihydroxy-2-naphthoate biosynthesis; 1,4-dihydroxy-2-naphthoate from chorismate: step 2/7.</text>
</comment>
<comment type="pathway">
    <text evidence="1">Cofactor biosynthesis; phylloquinone biosynthesis.</text>
</comment>
<comment type="subunit">
    <text evidence="1">Homodimer.</text>
</comment>
<comment type="similarity">
    <text evidence="1">Belongs to the TPP enzyme family. MenD subfamily.</text>
</comment>
<keyword id="KW-0460">Magnesium</keyword>
<keyword id="KW-0464">Manganese</keyword>
<keyword id="KW-0479">Metal-binding</keyword>
<keyword id="KW-1185">Reference proteome</keyword>
<keyword id="KW-0786">Thiamine pyrophosphate</keyword>
<keyword id="KW-0808">Transferase</keyword>
<sequence>MTSSIECQNFLRSLQLLNLLIKIGVQNLILCPGSRSAPLAIAAGELNKLGMVNIFNSIDERSAGFHSLGISAASGNLSLVITTSGTAVSNLLPAAVEADRSCKGVIFLTADRPLRLKDCGANQTVNQEDFLSSVCRSVLSTNLNGLHETQENEILNLVRITEKQISTFPGPIHLNIPIDKPLDISFLNKKNVLEVFKRIYLKKQYVFQKVEIKSDKNKFLEISKIFNLDESGIILVGPYQGSVNDLSSFNKSLEQLQEITGWPVFADPVSGVYSDLRGLVVNWELVLRKHKNLIKCKQLLRLGPMSSSIDLENFLIKFEGIQILIKEKNYRKLDPIKKSFEYDFGLLNFTSILLEELSFNEKNKKSLTPLALDLIEEGKQIKDILKDEIIIDNKITEYKLANLVPKLWPAEHPIMLSASSPIRDWLTFSENGTLTRNCFSFRGASGIDGTLSLALGISRIKNPLLLVTGDLAFVHDINGWLIENSVDMNLTILLIDNNGGNIFNRIYKKNLKEDEFKKLFLMPKEINWSKLSESYQVKFKSVSNFKKLREAFDWSISIQKSVIIKVDIDPENEIYEKNALLEKIIGS</sequence>
<proteinExistence type="inferred from homology"/>
<dbReference type="EC" id="2.2.1.9" evidence="1"/>
<dbReference type="EMBL" id="CP000576">
    <property type="protein sequence ID" value="ABO17256.1"/>
    <property type="molecule type" value="Genomic_DNA"/>
</dbReference>
<dbReference type="RefSeq" id="WP_011862623.1">
    <property type="nucleotide sequence ID" value="NC_009091.1"/>
</dbReference>
<dbReference type="SMR" id="A3PBY1"/>
<dbReference type="STRING" id="167546.P9301_06331"/>
<dbReference type="KEGG" id="pmg:P9301_06331"/>
<dbReference type="eggNOG" id="COG1165">
    <property type="taxonomic scope" value="Bacteria"/>
</dbReference>
<dbReference type="HOGENOM" id="CLU_006051_3_0_3"/>
<dbReference type="OrthoDB" id="9791859at2"/>
<dbReference type="UniPathway" id="UPA00995"/>
<dbReference type="UniPathway" id="UPA01057">
    <property type="reaction ID" value="UER00164"/>
</dbReference>
<dbReference type="Proteomes" id="UP000001430">
    <property type="component" value="Chromosome"/>
</dbReference>
<dbReference type="GO" id="GO:0070204">
    <property type="term" value="F:2-succinyl-5-enolpyruvyl-6-hydroxy-3-cyclohexene-1-carboxylic-acid synthase activity"/>
    <property type="evidence" value="ECO:0007669"/>
    <property type="project" value="UniProtKB-UniRule"/>
</dbReference>
<dbReference type="GO" id="GO:0000287">
    <property type="term" value="F:magnesium ion binding"/>
    <property type="evidence" value="ECO:0007669"/>
    <property type="project" value="UniProtKB-UniRule"/>
</dbReference>
<dbReference type="GO" id="GO:0030145">
    <property type="term" value="F:manganese ion binding"/>
    <property type="evidence" value="ECO:0007669"/>
    <property type="project" value="UniProtKB-UniRule"/>
</dbReference>
<dbReference type="GO" id="GO:0030976">
    <property type="term" value="F:thiamine pyrophosphate binding"/>
    <property type="evidence" value="ECO:0007669"/>
    <property type="project" value="UniProtKB-UniRule"/>
</dbReference>
<dbReference type="GO" id="GO:0009234">
    <property type="term" value="P:menaquinone biosynthetic process"/>
    <property type="evidence" value="ECO:0007669"/>
    <property type="project" value="InterPro"/>
</dbReference>
<dbReference type="GO" id="GO:0042372">
    <property type="term" value="P:phylloquinone biosynthetic process"/>
    <property type="evidence" value="ECO:0007669"/>
    <property type="project" value="UniProtKB-UniRule"/>
</dbReference>
<dbReference type="CDD" id="cd07037">
    <property type="entry name" value="TPP_PYR_MenD"/>
    <property type="match status" value="1"/>
</dbReference>
<dbReference type="CDD" id="cd02009">
    <property type="entry name" value="TPP_SHCHC_synthase"/>
    <property type="match status" value="1"/>
</dbReference>
<dbReference type="Gene3D" id="3.40.50.970">
    <property type="match status" value="2"/>
</dbReference>
<dbReference type="Gene3D" id="3.40.50.1220">
    <property type="entry name" value="TPP-binding domain"/>
    <property type="match status" value="1"/>
</dbReference>
<dbReference type="HAMAP" id="MF_01659">
    <property type="entry name" value="MenD"/>
    <property type="match status" value="1"/>
</dbReference>
<dbReference type="InterPro" id="IPR004433">
    <property type="entry name" value="MenaQ_synth_MenD"/>
</dbReference>
<dbReference type="InterPro" id="IPR029061">
    <property type="entry name" value="THDP-binding"/>
</dbReference>
<dbReference type="InterPro" id="IPR012001">
    <property type="entry name" value="Thiamin_PyroP_enz_TPP-bd_dom"/>
</dbReference>
<dbReference type="InterPro" id="IPR011766">
    <property type="entry name" value="TPP_enzyme_TPP-bd"/>
</dbReference>
<dbReference type="NCBIfam" id="TIGR00173">
    <property type="entry name" value="menD"/>
    <property type="match status" value="1"/>
</dbReference>
<dbReference type="PANTHER" id="PTHR42916">
    <property type="entry name" value="2-SUCCINYL-5-ENOLPYRUVYL-6-HYDROXY-3-CYCLOHEXENE-1-CARBOXYLATE SYNTHASE"/>
    <property type="match status" value="1"/>
</dbReference>
<dbReference type="PANTHER" id="PTHR42916:SF1">
    <property type="entry name" value="PROTEIN PHYLLO, CHLOROPLASTIC"/>
    <property type="match status" value="1"/>
</dbReference>
<dbReference type="Pfam" id="PF02775">
    <property type="entry name" value="TPP_enzyme_C"/>
    <property type="match status" value="1"/>
</dbReference>
<dbReference type="Pfam" id="PF02776">
    <property type="entry name" value="TPP_enzyme_N"/>
    <property type="match status" value="1"/>
</dbReference>
<dbReference type="PIRSF" id="PIRSF004983">
    <property type="entry name" value="MenD"/>
    <property type="match status" value="1"/>
</dbReference>
<dbReference type="SUPFAM" id="SSF52518">
    <property type="entry name" value="Thiamin diphosphate-binding fold (THDP-binding)"/>
    <property type="match status" value="2"/>
</dbReference>
<name>MEND_PROM0</name>